<reference key="1">
    <citation type="journal article" date="2004" name="Proc. Natl. Acad. Sci. U.S.A.">
        <title>AtTPK4, an Arabidopsis tandem-pore K+ channel, poised to control the pollen membrane voltage in a pH- and Ca2+-dependent manner.</title>
        <authorList>
            <person name="Becker D."/>
            <person name="Geiger D."/>
            <person name="Dunkel M."/>
            <person name="Roller A."/>
            <person name="Bertl A."/>
            <person name="Latz A."/>
            <person name="Carpaneto A."/>
            <person name="Dietrich P."/>
            <person name="Roelfsema M.R."/>
            <person name="Voelker C."/>
            <person name="Schmidt D."/>
            <person name="Mueller-Roeber B."/>
            <person name="Czempinski K."/>
            <person name="Hedrich R."/>
        </authorList>
    </citation>
    <scope>NUCLEOTIDE SEQUENCE [MRNA]</scope>
    <scope>TISSUE SPECIFICITY</scope>
    <scope>SUBCELLULAR LOCATION</scope>
    <scope>DISRUPTION PHENOTYPE</scope>
    <scope>GENE FAMILY</scope>
    <scope>NOMENCLATURE</scope>
    <source>
        <strain>cv. Columbia</strain>
    </source>
</reference>
<reference key="2">
    <citation type="journal article" date="2000" name="Nature">
        <title>Sequence and analysis of chromosome 1 of the plant Arabidopsis thaliana.</title>
        <authorList>
            <person name="Theologis A."/>
            <person name="Ecker J.R."/>
            <person name="Palm C.J."/>
            <person name="Federspiel N.A."/>
            <person name="Kaul S."/>
            <person name="White O."/>
            <person name="Alonso J."/>
            <person name="Altafi H."/>
            <person name="Araujo R."/>
            <person name="Bowman C.L."/>
            <person name="Brooks S.Y."/>
            <person name="Buehler E."/>
            <person name="Chan A."/>
            <person name="Chao Q."/>
            <person name="Chen H."/>
            <person name="Cheuk R.F."/>
            <person name="Chin C.W."/>
            <person name="Chung M.K."/>
            <person name="Conn L."/>
            <person name="Conway A.B."/>
            <person name="Conway A.R."/>
            <person name="Creasy T.H."/>
            <person name="Dewar K."/>
            <person name="Dunn P."/>
            <person name="Etgu P."/>
            <person name="Feldblyum T.V."/>
            <person name="Feng J.-D."/>
            <person name="Fong B."/>
            <person name="Fujii C.Y."/>
            <person name="Gill J.E."/>
            <person name="Goldsmith A.D."/>
            <person name="Haas B."/>
            <person name="Hansen N.F."/>
            <person name="Hughes B."/>
            <person name="Huizar L."/>
            <person name="Hunter J.L."/>
            <person name="Jenkins J."/>
            <person name="Johnson-Hopson C."/>
            <person name="Khan S."/>
            <person name="Khaykin E."/>
            <person name="Kim C.J."/>
            <person name="Koo H.L."/>
            <person name="Kremenetskaia I."/>
            <person name="Kurtz D.B."/>
            <person name="Kwan A."/>
            <person name="Lam B."/>
            <person name="Langin-Hooper S."/>
            <person name="Lee A."/>
            <person name="Lee J.M."/>
            <person name="Lenz C.A."/>
            <person name="Li J.H."/>
            <person name="Li Y.-P."/>
            <person name="Lin X."/>
            <person name="Liu S.X."/>
            <person name="Liu Z.A."/>
            <person name="Luros J.S."/>
            <person name="Maiti R."/>
            <person name="Marziali A."/>
            <person name="Militscher J."/>
            <person name="Miranda M."/>
            <person name="Nguyen M."/>
            <person name="Nierman W.C."/>
            <person name="Osborne B.I."/>
            <person name="Pai G."/>
            <person name="Peterson J."/>
            <person name="Pham P.K."/>
            <person name="Rizzo M."/>
            <person name="Rooney T."/>
            <person name="Rowley D."/>
            <person name="Sakano H."/>
            <person name="Salzberg S.L."/>
            <person name="Schwartz J.R."/>
            <person name="Shinn P."/>
            <person name="Southwick A.M."/>
            <person name="Sun H."/>
            <person name="Tallon L.J."/>
            <person name="Tambunga G."/>
            <person name="Toriumi M.J."/>
            <person name="Town C.D."/>
            <person name="Utterback T."/>
            <person name="Van Aken S."/>
            <person name="Vaysberg M."/>
            <person name="Vysotskaia V.S."/>
            <person name="Walker M."/>
            <person name="Wu D."/>
            <person name="Yu G."/>
            <person name="Fraser C.M."/>
            <person name="Venter J.C."/>
            <person name="Davis R.W."/>
        </authorList>
    </citation>
    <scope>NUCLEOTIDE SEQUENCE [LARGE SCALE GENOMIC DNA]</scope>
    <source>
        <strain>cv. Columbia</strain>
    </source>
</reference>
<reference key="3">
    <citation type="journal article" date="2017" name="Plant J.">
        <title>Araport11: a complete reannotation of the Arabidopsis thaliana reference genome.</title>
        <authorList>
            <person name="Cheng C.Y."/>
            <person name="Krishnakumar V."/>
            <person name="Chan A.P."/>
            <person name="Thibaud-Nissen F."/>
            <person name="Schobel S."/>
            <person name="Town C.D."/>
        </authorList>
    </citation>
    <scope>GENOME REANNOTATION</scope>
    <source>
        <strain>cv. Columbia</strain>
    </source>
</reference>
<reference key="4">
    <citation type="journal article" date="2001" name="Plant Physiol.">
        <title>Phylogenetic relationships within cation transporter families of Arabidopsis.</title>
        <authorList>
            <person name="Maeser P."/>
            <person name="Thomine S."/>
            <person name="Schroeder J.I."/>
            <person name="Ward J.M."/>
            <person name="Hirschi K."/>
            <person name="Sze H."/>
            <person name="Talke I.N."/>
            <person name="Amtmann A."/>
            <person name="Maathuis F.J.M."/>
            <person name="Sanders D."/>
            <person name="Harper J.F."/>
            <person name="Tchieu J."/>
            <person name="Gribskov M."/>
            <person name="Persans M.W."/>
            <person name="Salt D.E."/>
            <person name="Kim S.A."/>
            <person name="Guerinot M.L."/>
        </authorList>
    </citation>
    <scope>GENE FAMILY</scope>
    <scope>NOMENCLATURE</scope>
</reference>
<reference key="5">
    <citation type="journal article" date="2006" name="Plant J.">
        <title>Members of the Arabidopsis AtTPK/KCO family form homomeric vacuolar channels in planta.</title>
        <authorList>
            <person name="Voelker C."/>
            <person name="Schmidt D."/>
            <person name="Mueller-Roeber B."/>
            <person name="Czempinski K."/>
        </authorList>
    </citation>
    <scope>TISSUE SPECIFICITY</scope>
    <scope>DEVELOPMENTAL STAGE</scope>
</reference>
<reference key="6">
    <citation type="journal article" date="2008" name="Mol. Plant">
        <title>Targeting of vacuolar membrane localized members of the TPK channel family.</title>
        <authorList>
            <person name="Dunkel M."/>
            <person name="Latz A."/>
            <person name="Schumacher K."/>
            <person name="Mueller T."/>
            <person name="Becker D."/>
            <person name="Hedrich R."/>
        </authorList>
    </citation>
    <scope>SUBCELLULAR LOCATION</scope>
</reference>
<accession>Q9FWX6</accession>
<accession>Q6X308</accession>
<sequence length="284" mass="32061">MEEENLLNENLLHPNESSPEETQVTTVSKSKWTILVLAMILLLVYLTFGVCTYSFFRDQFSGTETNLFVDAFYFSIVTFSTVGYGDIVPSTSTTKILTIVLVSTGVVFLDYLLNRVVSHVLSLQENAILDRINKTRNRAIRDHIAEDGKIRLKWKLCLAFCAVGLCVGSGALFLHVFERLDWLDSVYLSVISVTTVGYGDKTFKTVEGRGFAVFWLLLSTIAMATLFLYLAEMRIDRTTVMKLPPSESEFIVFKLRESGRISEDDIKQIVREFENLEEVPSSGS</sequence>
<organism>
    <name type="scientific">Arabidopsis thaliana</name>
    <name type="common">Mouse-ear cress</name>
    <dbReference type="NCBI Taxonomy" id="3702"/>
    <lineage>
        <taxon>Eukaryota</taxon>
        <taxon>Viridiplantae</taxon>
        <taxon>Streptophyta</taxon>
        <taxon>Embryophyta</taxon>
        <taxon>Tracheophyta</taxon>
        <taxon>Spermatophyta</taxon>
        <taxon>Magnoliopsida</taxon>
        <taxon>eudicotyledons</taxon>
        <taxon>Gunneridae</taxon>
        <taxon>Pentapetalae</taxon>
        <taxon>rosids</taxon>
        <taxon>malvids</taxon>
        <taxon>Brassicales</taxon>
        <taxon>Brassicaceae</taxon>
        <taxon>Camelineae</taxon>
        <taxon>Arabidopsis</taxon>
    </lineage>
</organism>
<dbReference type="EMBL" id="AY258073">
    <property type="protein sequence ID" value="AAP82009.1"/>
    <property type="molecule type" value="mRNA"/>
</dbReference>
<dbReference type="EMBL" id="AC022521">
    <property type="protein sequence ID" value="AAG10638.1"/>
    <property type="molecule type" value="Genomic_DNA"/>
</dbReference>
<dbReference type="EMBL" id="CP002684">
    <property type="protein sequence ID" value="AEE27439.1"/>
    <property type="molecule type" value="Genomic_DNA"/>
</dbReference>
<dbReference type="PIR" id="D86155">
    <property type="entry name" value="D86155"/>
</dbReference>
<dbReference type="RefSeq" id="NP_171752.1">
    <property type="nucleotide sequence ID" value="NM_100132.2"/>
</dbReference>
<dbReference type="SMR" id="Q9FWX6"/>
<dbReference type="BioGRID" id="23086">
    <property type="interactions" value="2"/>
</dbReference>
<dbReference type="FunCoup" id="Q9FWX6">
    <property type="interactions" value="8"/>
</dbReference>
<dbReference type="STRING" id="3702.Q9FWX6"/>
<dbReference type="TCDB" id="1.A.1.7.2">
    <property type="family name" value="the voltage-gated ion channel (vic) superfamily"/>
</dbReference>
<dbReference type="PaxDb" id="3702-AT1G02510.1"/>
<dbReference type="EnsemblPlants" id="AT1G02510.1">
    <property type="protein sequence ID" value="AT1G02510.1"/>
    <property type="gene ID" value="AT1G02510"/>
</dbReference>
<dbReference type="GeneID" id="837846"/>
<dbReference type="Gramene" id="AT1G02510.1">
    <property type="protein sequence ID" value="AT1G02510.1"/>
    <property type="gene ID" value="AT1G02510"/>
</dbReference>
<dbReference type="KEGG" id="ath:AT1G02510"/>
<dbReference type="Araport" id="AT1G02510"/>
<dbReference type="TAIR" id="AT1G02510">
    <property type="gene designation" value="TPK4"/>
</dbReference>
<dbReference type="eggNOG" id="KOG1418">
    <property type="taxonomic scope" value="Eukaryota"/>
</dbReference>
<dbReference type="HOGENOM" id="CLU_033675_1_0_1"/>
<dbReference type="InParanoid" id="Q9FWX6"/>
<dbReference type="OMA" id="FLHVFER"/>
<dbReference type="PhylomeDB" id="Q9FWX6"/>
<dbReference type="PRO" id="PR:Q9FWX6"/>
<dbReference type="Proteomes" id="UP000006548">
    <property type="component" value="Chromosome 1"/>
</dbReference>
<dbReference type="ExpressionAtlas" id="Q9FWX6">
    <property type="expression patterns" value="baseline and differential"/>
</dbReference>
<dbReference type="GO" id="GO:0005886">
    <property type="term" value="C:plasma membrane"/>
    <property type="evidence" value="ECO:0007669"/>
    <property type="project" value="UniProtKB-SubCell"/>
</dbReference>
<dbReference type="GO" id="GO:0005774">
    <property type="term" value="C:vacuolar membrane"/>
    <property type="evidence" value="ECO:0007669"/>
    <property type="project" value="UniProtKB-ARBA"/>
</dbReference>
<dbReference type="GO" id="GO:0005267">
    <property type="term" value="F:potassium channel activity"/>
    <property type="evidence" value="ECO:0007669"/>
    <property type="project" value="UniProtKB-KW"/>
</dbReference>
<dbReference type="Gene3D" id="1.10.287.70">
    <property type="match status" value="2"/>
</dbReference>
<dbReference type="InterPro" id="IPR003280">
    <property type="entry name" value="2pore_dom_K_chnl"/>
</dbReference>
<dbReference type="InterPro" id="IPR013099">
    <property type="entry name" value="K_chnl_dom"/>
</dbReference>
<dbReference type="PANTHER" id="PTHR11003">
    <property type="entry name" value="POTASSIUM CHANNEL, SUBFAMILY K"/>
    <property type="match status" value="1"/>
</dbReference>
<dbReference type="PANTHER" id="PTHR11003:SF268">
    <property type="entry name" value="TWO-PORE POTASSIUM CHANNEL 4-RELATED"/>
    <property type="match status" value="1"/>
</dbReference>
<dbReference type="Pfam" id="PF07885">
    <property type="entry name" value="Ion_trans_2"/>
    <property type="match status" value="2"/>
</dbReference>
<dbReference type="PRINTS" id="PR01333">
    <property type="entry name" value="2POREKCHANEL"/>
</dbReference>
<dbReference type="SUPFAM" id="SSF81324">
    <property type="entry name" value="Voltage-gated potassium channels"/>
    <property type="match status" value="2"/>
</dbReference>
<name>KCO4_ARATH</name>
<evidence type="ECO:0000255" key="1"/>
<evidence type="ECO:0000256" key="2">
    <source>
        <dbReference type="SAM" id="MobiDB-lite"/>
    </source>
</evidence>
<evidence type="ECO:0000269" key="3">
    <source>
    </source>
</evidence>
<evidence type="ECO:0000269" key="4">
    <source>
    </source>
</evidence>
<evidence type="ECO:0000269" key="5">
    <source>
    </source>
</evidence>
<evidence type="ECO:0000305" key="6"/>
<protein>
    <recommendedName>
        <fullName>Two-pore potassium channel 4</fullName>
        <shortName>AtTPK4</shortName>
    </recommendedName>
    <alternativeName>
        <fullName>Outward-rectifying potassium channel 4</fullName>
        <shortName>AtKCO4</shortName>
    </alternativeName>
</protein>
<proteinExistence type="evidence at transcript level"/>
<keyword id="KW-1003">Cell membrane</keyword>
<keyword id="KW-0407">Ion channel</keyword>
<keyword id="KW-0406">Ion transport</keyword>
<keyword id="KW-0472">Membrane</keyword>
<keyword id="KW-0630">Potassium</keyword>
<keyword id="KW-0631">Potassium channel</keyword>
<keyword id="KW-0633">Potassium transport</keyword>
<keyword id="KW-1185">Reference proteome</keyword>
<keyword id="KW-0812">Transmembrane</keyword>
<keyword id="KW-1133">Transmembrane helix</keyword>
<keyword id="KW-0813">Transport</keyword>
<gene>
    <name type="primary">TPK4</name>
    <name type="synonym">KCO4</name>
    <name type="ordered locus">At1g02510</name>
    <name type="ORF">T14P4.16</name>
</gene>
<feature type="chain" id="PRO_0000101778" description="Two-pore potassium channel 4">
    <location>
        <begin position="1"/>
        <end position="284"/>
    </location>
</feature>
<feature type="topological domain" description="Cytoplasmic" evidence="1">
    <location>
        <begin position="1"/>
        <end position="31"/>
    </location>
</feature>
<feature type="transmembrane region" description="Helical" evidence="1">
    <location>
        <begin position="32"/>
        <end position="52"/>
    </location>
</feature>
<feature type="intramembrane region" description="Pore-forming; Name=Pore-forming 1" evidence="1">
    <location>
        <begin position="70"/>
        <end position="89"/>
    </location>
</feature>
<feature type="transmembrane region" description="Helical" evidence="1">
    <location>
        <begin position="93"/>
        <end position="113"/>
    </location>
</feature>
<feature type="topological domain" description="Cytoplasmic" evidence="1">
    <location>
        <begin position="114"/>
        <end position="156"/>
    </location>
</feature>
<feature type="transmembrane region" description="Helical" evidence="1">
    <location>
        <begin position="157"/>
        <end position="177"/>
    </location>
</feature>
<feature type="intramembrane region" description="Pore-forming; Name=Pore-forming 2" evidence="1">
    <location>
        <begin position="184"/>
        <end position="203"/>
    </location>
</feature>
<feature type="transmembrane region" description="Helical" evidence="1">
    <location>
        <begin position="211"/>
        <end position="231"/>
    </location>
</feature>
<feature type="topological domain" description="Cytoplasmic" evidence="1">
    <location>
        <begin position="232"/>
        <end position="284"/>
    </location>
</feature>
<feature type="region of interest" description="Disordered" evidence="2">
    <location>
        <begin position="1"/>
        <end position="21"/>
    </location>
</feature>
<comment type="function">
    <text>Voltage-independent, instantaneously activating, potassium-selective plasma membrane ion channel. Open rectifier. Regulated by cytoplasmic pH and extra-cellular calcium. Has some permeability for Rb(+) and NH(4)(+), but none for Na(+) or Li(+).</text>
</comment>
<comment type="subunit">
    <text evidence="6">Homodimer.</text>
</comment>
<comment type="subcellular location">
    <subcellularLocation>
        <location evidence="3 5">Cell membrane</location>
        <topology evidence="3 5">Multi-pass membrane protein</topology>
    </subcellularLocation>
</comment>
<comment type="tissue specificity">
    <text evidence="3 4">Predominantly expressed in pollen.</text>
</comment>
<comment type="developmental stage">
    <text evidence="4">Not expressed during very early stages of flower development, but detected when buds are still closed.</text>
</comment>
<comment type="domain">
    <text>Each of the two pore-forming region (also called P-domain or P-loop) is enclosed by two transmembrane segments (2P/4TM) and contains the GYGD signature motif which seems to be involved in potassium selectivity.</text>
</comment>
<comment type="disruption phenotype">
    <text evidence="3">No effect on pollen germination rate and growth.</text>
</comment>
<comment type="similarity">
    <text evidence="6">Belongs to the two pore domain potassium channel (TC 1.A.1.7) family.</text>
</comment>